<feature type="chain" id="PRO_0000182272" description="Transcriptional repressor NrdR">
    <location>
        <begin position="1"/>
        <end position="160"/>
    </location>
</feature>
<feature type="domain" description="ATP-cone" evidence="1">
    <location>
        <begin position="49"/>
        <end position="139"/>
    </location>
</feature>
<feature type="zinc finger region" evidence="1">
    <location>
        <begin position="3"/>
        <end position="34"/>
    </location>
</feature>
<keyword id="KW-0067">ATP-binding</keyword>
<keyword id="KW-0238">DNA-binding</keyword>
<keyword id="KW-0479">Metal-binding</keyword>
<keyword id="KW-0547">Nucleotide-binding</keyword>
<keyword id="KW-0678">Repressor</keyword>
<keyword id="KW-0804">Transcription</keyword>
<keyword id="KW-0805">Transcription regulation</keyword>
<keyword id="KW-0862">Zinc</keyword>
<keyword id="KW-0863">Zinc-finger</keyword>
<sequence length="160" mass="18111">MRCPFCGNADTQVVDSRVSEEGDTIRRRRRCLSCDKRFTTYERVELAMPSVVKRDGSRTEYDAGKVRGSLSLALRKRPVSTDEVDSAVARIEETLLASGMREVPSEQIGELVMGELKRLDKVAYVRYASVYKSFEDIGEFVEAIREMQGPLLPGKKLRKD</sequence>
<name>NRDR_BORPA</name>
<evidence type="ECO:0000255" key="1">
    <source>
        <dbReference type="HAMAP-Rule" id="MF_00440"/>
    </source>
</evidence>
<gene>
    <name evidence="1" type="primary">nrdR</name>
    <name type="ordered locus">BPP3874</name>
</gene>
<protein>
    <recommendedName>
        <fullName evidence="1">Transcriptional repressor NrdR</fullName>
    </recommendedName>
</protein>
<comment type="function">
    <text evidence="1">Negatively regulates transcription of bacterial ribonucleotide reductase nrd genes and operons by binding to NrdR-boxes.</text>
</comment>
<comment type="cofactor">
    <cofactor evidence="1">
        <name>Zn(2+)</name>
        <dbReference type="ChEBI" id="CHEBI:29105"/>
    </cofactor>
    <text evidence="1">Binds 1 zinc ion.</text>
</comment>
<comment type="similarity">
    <text evidence="1">Belongs to the NrdR family.</text>
</comment>
<organism>
    <name type="scientific">Bordetella parapertussis (strain 12822 / ATCC BAA-587 / NCTC 13253)</name>
    <dbReference type="NCBI Taxonomy" id="257311"/>
    <lineage>
        <taxon>Bacteria</taxon>
        <taxon>Pseudomonadati</taxon>
        <taxon>Pseudomonadota</taxon>
        <taxon>Betaproteobacteria</taxon>
        <taxon>Burkholderiales</taxon>
        <taxon>Alcaligenaceae</taxon>
        <taxon>Bordetella</taxon>
    </lineage>
</organism>
<proteinExistence type="inferred from homology"/>
<accession>Q7W401</accession>
<dbReference type="EMBL" id="BX640435">
    <property type="protein sequence ID" value="CAE39157.1"/>
    <property type="molecule type" value="Genomic_DNA"/>
</dbReference>
<dbReference type="RefSeq" id="WP_003814871.1">
    <property type="nucleotide sequence ID" value="NC_002928.3"/>
</dbReference>
<dbReference type="SMR" id="Q7W401"/>
<dbReference type="GeneID" id="93205674"/>
<dbReference type="KEGG" id="bpa:BPP3874"/>
<dbReference type="HOGENOM" id="CLU_108412_0_1_4"/>
<dbReference type="Proteomes" id="UP000001421">
    <property type="component" value="Chromosome"/>
</dbReference>
<dbReference type="GO" id="GO:0005524">
    <property type="term" value="F:ATP binding"/>
    <property type="evidence" value="ECO:0007669"/>
    <property type="project" value="UniProtKB-KW"/>
</dbReference>
<dbReference type="GO" id="GO:0003677">
    <property type="term" value="F:DNA binding"/>
    <property type="evidence" value="ECO:0007669"/>
    <property type="project" value="UniProtKB-KW"/>
</dbReference>
<dbReference type="GO" id="GO:0008270">
    <property type="term" value="F:zinc ion binding"/>
    <property type="evidence" value="ECO:0007669"/>
    <property type="project" value="UniProtKB-UniRule"/>
</dbReference>
<dbReference type="GO" id="GO:0045892">
    <property type="term" value="P:negative regulation of DNA-templated transcription"/>
    <property type="evidence" value="ECO:0007669"/>
    <property type="project" value="UniProtKB-UniRule"/>
</dbReference>
<dbReference type="HAMAP" id="MF_00440">
    <property type="entry name" value="NrdR"/>
    <property type="match status" value="1"/>
</dbReference>
<dbReference type="InterPro" id="IPR005144">
    <property type="entry name" value="ATP-cone_dom"/>
</dbReference>
<dbReference type="InterPro" id="IPR055173">
    <property type="entry name" value="NrdR-like_N"/>
</dbReference>
<dbReference type="InterPro" id="IPR003796">
    <property type="entry name" value="RNR_NrdR-like"/>
</dbReference>
<dbReference type="NCBIfam" id="TIGR00244">
    <property type="entry name" value="transcriptional regulator NrdR"/>
    <property type="match status" value="1"/>
</dbReference>
<dbReference type="PANTHER" id="PTHR30455">
    <property type="entry name" value="TRANSCRIPTIONAL REPRESSOR NRDR"/>
    <property type="match status" value="1"/>
</dbReference>
<dbReference type="PANTHER" id="PTHR30455:SF2">
    <property type="entry name" value="TRANSCRIPTIONAL REPRESSOR NRDR"/>
    <property type="match status" value="1"/>
</dbReference>
<dbReference type="Pfam" id="PF03477">
    <property type="entry name" value="ATP-cone"/>
    <property type="match status" value="1"/>
</dbReference>
<dbReference type="Pfam" id="PF22811">
    <property type="entry name" value="Zn_ribbon_NrdR"/>
    <property type="match status" value="1"/>
</dbReference>
<dbReference type="PROSITE" id="PS51161">
    <property type="entry name" value="ATP_CONE"/>
    <property type="match status" value="1"/>
</dbReference>
<reference key="1">
    <citation type="journal article" date="2003" name="Nat. Genet.">
        <title>Comparative analysis of the genome sequences of Bordetella pertussis, Bordetella parapertussis and Bordetella bronchiseptica.</title>
        <authorList>
            <person name="Parkhill J."/>
            <person name="Sebaihia M."/>
            <person name="Preston A."/>
            <person name="Murphy L.D."/>
            <person name="Thomson N.R."/>
            <person name="Harris D.E."/>
            <person name="Holden M.T.G."/>
            <person name="Churcher C.M."/>
            <person name="Bentley S.D."/>
            <person name="Mungall K.L."/>
            <person name="Cerdeno-Tarraga A.-M."/>
            <person name="Temple L."/>
            <person name="James K.D."/>
            <person name="Harris B."/>
            <person name="Quail M.A."/>
            <person name="Achtman M."/>
            <person name="Atkin R."/>
            <person name="Baker S."/>
            <person name="Basham D."/>
            <person name="Bason N."/>
            <person name="Cherevach I."/>
            <person name="Chillingworth T."/>
            <person name="Collins M."/>
            <person name="Cronin A."/>
            <person name="Davis P."/>
            <person name="Doggett J."/>
            <person name="Feltwell T."/>
            <person name="Goble A."/>
            <person name="Hamlin N."/>
            <person name="Hauser H."/>
            <person name="Holroyd S."/>
            <person name="Jagels K."/>
            <person name="Leather S."/>
            <person name="Moule S."/>
            <person name="Norberczak H."/>
            <person name="O'Neil S."/>
            <person name="Ormond D."/>
            <person name="Price C."/>
            <person name="Rabbinowitsch E."/>
            <person name="Rutter S."/>
            <person name="Sanders M."/>
            <person name="Saunders D."/>
            <person name="Seeger K."/>
            <person name="Sharp S."/>
            <person name="Simmonds M."/>
            <person name="Skelton J."/>
            <person name="Squares R."/>
            <person name="Squares S."/>
            <person name="Stevens K."/>
            <person name="Unwin L."/>
            <person name="Whitehead S."/>
            <person name="Barrell B.G."/>
            <person name="Maskell D.J."/>
        </authorList>
    </citation>
    <scope>NUCLEOTIDE SEQUENCE [LARGE SCALE GENOMIC DNA]</scope>
    <source>
        <strain>12822 / ATCC BAA-587 / NCTC 13253</strain>
    </source>
</reference>